<feature type="initiator methionine" description="Removed" evidence="1">
    <location>
        <position position="1"/>
    </location>
</feature>
<feature type="chain" id="PRO_0000172398" description="Large ribosomal subunit protein bL32">
    <location>
        <begin position="2"/>
        <end position="57"/>
    </location>
</feature>
<feature type="region of interest" description="Disordered" evidence="2">
    <location>
        <begin position="1"/>
        <end position="38"/>
    </location>
</feature>
<gene>
    <name type="primary">rpmF</name>
    <name type="ordered locus">STY1230</name>
    <name type="ordered locus">t1729</name>
</gene>
<dbReference type="EMBL" id="AL513382">
    <property type="protein sequence ID" value="CAD08315.1"/>
    <property type="molecule type" value="Genomic_DNA"/>
</dbReference>
<dbReference type="EMBL" id="AE014613">
    <property type="protein sequence ID" value="AAO69353.1"/>
    <property type="molecule type" value="Genomic_DNA"/>
</dbReference>
<dbReference type="RefSeq" id="NP_455684.1">
    <property type="nucleotide sequence ID" value="NC_003198.1"/>
</dbReference>
<dbReference type="RefSeq" id="WP_000290727.1">
    <property type="nucleotide sequence ID" value="NZ_WSUR01000030.1"/>
</dbReference>
<dbReference type="SMR" id="P0A7N7"/>
<dbReference type="STRING" id="220341.gene:17585195"/>
<dbReference type="GeneID" id="93776319"/>
<dbReference type="KEGG" id="stt:t1729"/>
<dbReference type="KEGG" id="sty:STY1230"/>
<dbReference type="PATRIC" id="fig|90370.929.peg.917"/>
<dbReference type="eggNOG" id="COG0333">
    <property type="taxonomic scope" value="Bacteria"/>
</dbReference>
<dbReference type="HOGENOM" id="CLU_129084_2_1_6"/>
<dbReference type="OMA" id="GMHRAHD"/>
<dbReference type="OrthoDB" id="9801927at2"/>
<dbReference type="Proteomes" id="UP000000541">
    <property type="component" value="Chromosome"/>
</dbReference>
<dbReference type="Proteomes" id="UP000002670">
    <property type="component" value="Chromosome"/>
</dbReference>
<dbReference type="GO" id="GO:0015934">
    <property type="term" value="C:large ribosomal subunit"/>
    <property type="evidence" value="ECO:0007669"/>
    <property type="project" value="InterPro"/>
</dbReference>
<dbReference type="GO" id="GO:0003735">
    <property type="term" value="F:structural constituent of ribosome"/>
    <property type="evidence" value="ECO:0007669"/>
    <property type="project" value="InterPro"/>
</dbReference>
<dbReference type="GO" id="GO:0006412">
    <property type="term" value="P:translation"/>
    <property type="evidence" value="ECO:0007669"/>
    <property type="project" value="UniProtKB-UniRule"/>
</dbReference>
<dbReference type="HAMAP" id="MF_00340">
    <property type="entry name" value="Ribosomal_bL32"/>
    <property type="match status" value="1"/>
</dbReference>
<dbReference type="InterPro" id="IPR002677">
    <property type="entry name" value="Ribosomal_bL32"/>
</dbReference>
<dbReference type="InterPro" id="IPR044957">
    <property type="entry name" value="Ribosomal_bL32_bact"/>
</dbReference>
<dbReference type="InterPro" id="IPR011332">
    <property type="entry name" value="Ribosomal_zn-bd"/>
</dbReference>
<dbReference type="NCBIfam" id="TIGR01031">
    <property type="entry name" value="rpmF_bact"/>
    <property type="match status" value="1"/>
</dbReference>
<dbReference type="PANTHER" id="PTHR35534">
    <property type="entry name" value="50S RIBOSOMAL PROTEIN L32"/>
    <property type="match status" value="1"/>
</dbReference>
<dbReference type="PANTHER" id="PTHR35534:SF1">
    <property type="entry name" value="LARGE RIBOSOMAL SUBUNIT PROTEIN BL32"/>
    <property type="match status" value="1"/>
</dbReference>
<dbReference type="Pfam" id="PF01783">
    <property type="entry name" value="Ribosomal_L32p"/>
    <property type="match status" value="1"/>
</dbReference>
<dbReference type="SUPFAM" id="SSF57829">
    <property type="entry name" value="Zn-binding ribosomal proteins"/>
    <property type="match status" value="1"/>
</dbReference>
<evidence type="ECO:0000250" key="1"/>
<evidence type="ECO:0000256" key="2">
    <source>
        <dbReference type="SAM" id="MobiDB-lite"/>
    </source>
</evidence>
<evidence type="ECO:0000305" key="3"/>
<sequence length="57" mass="6446">MAVQQNKPTRSKRGMRRSHDALTAVTSLSVDKTSGEKHLRHHITADGYYRGRKVIAK</sequence>
<organism>
    <name type="scientific">Salmonella typhi</name>
    <dbReference type="NCBI Taxonomy" id="90370"/>
    <lineage>
        <taxon>Bacteria</taxon>
        <taxon>Pseudomonadati</taxon>
        <taxon>Pseudomonadota</taxon>
        <taxon>Gammaproteobacteria</taxon>
        <taxon>Enterobacterales</taxon>
        <taxon>Enterobacteriaceae</taxon>
        <taxon>Salmonella</taxon>
    </lineage>
</organism>
<proteinExistence type="inferred from homology"/>
<reference key="1">
    <citation type="journal article" date="2001" name="Nature">
        <title>Complete genome sequence of a multiple drug resistant Salmonella enterica serovar Typhi CT18.</title>
        <authorList>
            <person name="Parkhill J."/>
            <person name="Dougan G."/>
            <person name="James K.D."/>
            <person name="Thomson N.R."/>
            <person name="Pickard D."/>
            <person name="Wain J."/>
            <person name="Churcher C.M."/>
            <person name="Mungall K.L."/>
            <person name="Bentley S.D."/>
            <person name="Holden M.T.G."/>
            <person name="Sebaihia M."/>
            <person name="Baker S."/>
            <person name="Basham D."/>
            <person name="Brooks K."/>
            <person name="Chillingworth T."/>
            <person name="Connerton P."/>
            <person name="Cronin A."/>
            <person name="Davis P."/>
            <person name="Davies R.M."/>
            <person name="Dowd L."/>
            <person name="White N."/>
            <person name="Farrar J."/>
            <person name="Feltwell T."/>
            <person name="Hamlin N."/>
            <person name="Haque A."/>
            <person name="Hien T.T."/>
            <person name="Holroyd S."/>
            <person name="Jagels K."/>
            <person name="Krogh A."/>
            <person name="Larsen T.S."/>
            <person name="Leather S."/>
            <person name="Moule S."/>
            <person name="O'Gaora P."/>
            <person name="Parry C."/>
            <person name="Quail M.A."/>
            <person name="Rutherford K.M."/>
            <person name="Simmonds M."/>
            <person name="Skelton J."/>
            <person name="Stevens K."/>
            <person name="Whitehead S."/>
            <person name="Barrell B.G."/>
        </authorList>
    </citation>
    <scope>NUCLEOTIDE SEQUENCE [LARGE SCALE GENOMIC DNA]</scope>
    <source>
        <strain>CT18</strain>
    </source>
</reference>
<reference key="2">
    <citation type="journal article" date="2003" name="J. Bacteriol.">
        <title>Comparative genomics of Salmonella enterica serovar Typhi strains Ty2 and CT18.</title>
        <authorList>
            <person name="Deng W."/>
            <person name="Liou S.-R."/>
            <person name="Plunkett G. III"/>
            <person name="Mayhew G.F."/>
            <person name="Rose D.J."/>
            <person name="Burland V."/>
            <person name="Kodoyianni V."/>
            <person name="Schwartz D.C."/>
            <person name="Blattner F.R."/>
        </authorList>
    </citation>
    <scope>NUCLEOTIDE SEQUENCE [LARGE SCALE GENOMIC DNA]</scope>
    <source>
        <strain>ATCC 700931 / Ty2</strain>
    </source>
</reference>
<protein>
    <recommendedName>
        <fullName evidence="3">Large ribosomal subunit protein bL32</fullName>
    </recommendedName>
    <alternativeName>
        <fullName>50S ribosomal protein L32</fullName>
    </alternativeName>
</protein>
<accession>P0A7N7</accession>
<accession>P02435</accession>
<comment type="similarity">
    <text evidence="3">Belongs to the bacterial ribosomal protein bL32 family.</text>
</comment>
<name>RL32_SALTI</name>
<keyword id="KW-0687">Ribonucleoprotein</keyword>
<keyword id="KW-0689">Ribosomal protein</keyword>